<name>VM1L4_MACLB</name>
<dbReference type="EC" id="3.4.24.-"/>
<dbReference type="EMBL" id="AY987816">
    <property type="protein sequence ID" value="AAY45880.1"/>
    <property type="molecule type" value="mRNA"/>
</dbReference>
<dbReference type="SMR" id="Q3ZD74"/>
<dbReference type="MEROPS" id="M12.164"/>
<dbReference type="GO" id="GO:0005576">
    <property type="term" value="C:extracellular region"/>
    <property type="evidence" value="ECO:0007669"/>
    <property type="project" value="UniProtKB-SubCell"/>
</dbReference>
<dbReference type="GO" id="GO:0005886">
    <property type="term" value="C:plasma membrane"/>
    <property type="evidence" value="ECO:0007669"/>
    <property type="project" value="TreeGrafter"/>
</dbReference>
<dbReference type="GO" id="GO:0046872">
    <property type="term" value="F:metal ion binding"/>
    <property type="evidence" value="ECO:0007669"/>
    <property type="project" value="UniProtKB-KW"/>
</dbReference>
<dbReference type="GO" id="GO:0004222">
    <property type="term" value="F:metalloendopeptidase activity"/>
    <property type="evidence" value="ECO:0007669"/>
    <property type="project" value="InterPro"/>
</dbReference>
<dbReference type="GO" id="GO:0090729">
    <property type="term" value="F:toxin activity"/>
    <property type="evidence" value="ECO:0007669"/>
    <property type="project" value="UniProtKB-KW"/>
</dbReference>
<dbReference type="GO" id="GO:0006508">
    <property type="term" value="P:proteolysis"/>
    <property type="evidence" value="ECO:0007669"/>
    <property type="project" value="UniProtKB-KW"/>
</dbReference>
<dbReference type="CDD" id="cd04269">
    <property type="entry name" value="ZnMc_adamalysin_II_like"/>
    <property type="match status" value="1"/>
</dbReference>
<dbReference type="FunFam" id="3.40.390.10:FF:000002">
    <property type="entry name" value="Disintegrin and metalloproteinase domain-containing protein 22"/>
    <property type="match status" value="1"/>
</dbReference>
<dbReference type="Gene3D" id="3.40.390.10">
    <property type="entry name" value="Collagenase (Catalytic Domain)"/>
    <property type="match status" value="1"/>
</dbReference>
<dbReference type="InterPro" id="IPR024079">
    <property type="entry name" value="MetalloPept_cat_dom_sf"/>
</dbReference>
<dbReference type="InterPro" id="IPR001590">
    <property type="entry name" value="Peptidase_M12B"/>
</dbReference>
<dbReference type="InterPro" id="IPR034027">
    <property type="entry name" value="Reprolysin_adamalysin"/>
</dbReference>
<dbReference type="PANTHER" id="PTHR11905">
    <property type="entry name" value="ADAM A DISINTEGRIN AND METALLOPROTEASE DOMAIN"/>
    <property type="match status" value="1"/>
</dbReference>
<dbReference type="PANTHER" id="PTHR11905:SF32">
    <property type="entry name" value="DISINTEGRIN AND METALLOPROTEINASE DOMAIN-CONTAINING PROTEIN 28"/>
    <property type="match status" value="1"/>
</dbReference>
<dbReference type="Pfam" id="PF01421">
    <property type="entry name" value="Reprolysin"/>
    <property type="match status" value="1"/>
</dbReference>
<dbReference type="SUPFAM" id="SSF55486">
    <property type="entry name" value="Metalloproteases ('zincins'), catalytic domain"/>
    <property type="match status" value="1"/>
</dbReference>
<dbReference type="PROSITE" id="PS50215">
    <property type="entry name" value="ADAM_MEPRO"/>
    <property type="match status" value="1"/>
</dbReference>
<dbReference type="PROSITE" id="PS00142">
    <property type="entry name" value="ZINC_PROTEASE"/>
    <property type="match status" value="1"/>
</dbReference>
<feature type="propeptide" id="PRO_0000318584" evidence="1">
    <location>
        <begin position="1" status="less than"/>
        <end position="14"/>
    </location>
</feature>
<feature type="chain" id="PRO_0000318585" description="Snake venom metalloproteinase lebetase-4">
    <location>
        <begin position="15"/>
        <end position="217"/>
    </location>
</feature>
<feature type="domain" description="Peptidase M12B" evidence="2">
    <location>
        <begin position="21"/>
        <end position="217"/>
    </location>
</feature>
<feature type="active site" evidence="2 3">
    <location>
        <position position="158"/>
    </location>
</feature>
<feature type="binding site" evidence="1">
    <location>
        <position position="24"/>
    </location>
    <ligand>
        <name>Ca(2+)</name>
        <dbReference type="ChEBI" id="CHEBI:29108"/>
    </ligand>
</feature>
<feature type="binding site" evidence="1">
    <location>
        <position position="108"/>
    </location>
    <ligand>
        <name>Ca(2+)</name>
        <dbReference type="ChEBI" id="CHEBI:29108"/>
    </ligand>
</feature>
<feature type="binding site" evidence="1">
    <location>
        <position position="157"/>
    </location>
    <ligand>
        <name>Zn(2+)</name>
        <dbReference type="ChEBI" id="CHEBI:29105"/>
        <note>catalytic</note>
    </ligand>
</feature>
<feature type="binding site" evidence="1">
    <location>
        <position position="161"/>
    </location>
    <ligand>
        <name>Zn(2+)</name>
        <dbReference type="ChEBI" id="CHEBI:29105"/>
        <note>catalytic</note>
    </ligand>
</feature>
<feature type="binding site" evidence="1">
    <location>
        <position position="167"/>
    </location>
    <ligand>
        <name>Zn(2+)</name>
        <dbReference type="ChEBI" id="CHEBI:29105"/>
        <note>catalytic</note>
    </ligand>
</feature>
<feature type="binding site" evidence="1">
    <location>
        <position position="212"/>
    </location>
    <ligand>
        <name>Ca(2+)</name>
        <dbReference type="ChEBI" id="CHEBI:29108"/>
    </ligand>
</feature>
<feature type="binding site" evidence="1">
    <location>
        <position position="215"/>
    </location>
    <ligand>
        <name>Ca(2+)</name>
        <dbReference type="ChEBI" id="CHEBI:29108"/>
    </ligand>
</feature>
<feature type="modified residue" description="Pyrrolidone carboxylic acid" evidence="1">
    <location>
        <position position="15"/>
    </location>
</feature>
<feature type="disulfide bond" evidence="2">
    <location>
        <begin position="132"/>
        <end position="212"/>
    </location>
</feature>
<feature type="disulfide bond" evidence="2">
    <location>
        <begin position="172"/>
        <end position="196"/>
    </location>
</feature>
<feature type="disulfide bond" evidence="2">
    <location>
        <begin position="174"/>
        <end position="179"/>
    </location>
</feature>
<feature type="non-terminal residue">
    <location>
        <position position="1"/>
    </location>
</feature>
<proteinExistence type="evidence at transcript level"/>
<comment type="function">
    <text evidence="1">Snake venom zinc metalloprotease that hydrolyzes the Aalpha-chain and more slowly the Bbeta-chain of fibrin and fibrinogen. Also hydrolyzes casein and B-chain of oxidized insulin. Its fibrinolytic activity is direct, without any plasminogen activation. Inhibits ADP-induced and collagen-induced platelet aggregation. Shows low hemorrhagic activity. Cleaves the plasma proteinase inhibitors alpha(2)-macroglobulin (A2M) and alpha(2)M-related pregnancy zone protein (PZP), and is inhibited by them (By similarity).</text>
</comment>
<comment type="cofactor">
    <cofactor evidence="1">
        <name>Zn(2+)</name>
        <dbReference type="ChEBI" id="CHEBI:29105"/>
    </cofactor>
    <text evidence="1">Binds 1 zinc ion per subunit.</text>
</comment>
<comment type="activity regulation">
    <text evidence="1">Fibrinolytic and caseinolytic activities are inhibited by Cd(2+), Cu(2+) and Co(2+) ions. Not inhibited by Mg(2+), Ca(2+) and Ba(2+). Also inhibited by EDTA, EGTA and 1,10-phenanthroline (By similarity).</text>
</comment>
<comment type="subunit">
    <text evidence="1">Monomer.</text>
</comment>
<comment type="subcellular location">
    <subcellularLocation>
        <location evidence="1">Secreted</location>
    </subcellularLocation>
</comment>
<comment type="tissue specificity">
    <text>Expressed by the venom gland.</text>
</comment>
<comment type="similarity">
    <text evidence="4">Belongs to the venom metalloproteinase (M12B) family. P-I subfamily.</text>
</comment>
<protein>
    <recommendedName>
        <fullName>Snake venom metalloproteinase lebetase-4</fullName>
        <shortName>Le-4</shortName>
        <shortName>Le4</shortName>
        <ecNumber>3.4.24.-</ecNumber>
    </recommendedName>
</protein>
<keyword id="KW-0106">Calcium</keyword>
<keyword id="KW-1015">Disulfide bond</keyword>
<keyword id="KW-1206">Fibrinogenolytic toxin</keyword>
<keyword id="KW-1205">Fibrinolytic toxin</keyword>
<keyword id="KW-1200">Hemorrhagic toxin</keyword>
<keyword id="KW-1199">Hemostasis impairing toxin</keyword>
<keyword id="KW-0378">Hydrolase</keyword>
<keyword id="KW-0479">Metal-binding</keyword>
<keyword id="KW-0482">Metalloprotease</keyword>
<keyword id="KW-1201">Platelet aggregation inhibiting toxin</keyword>
<keyword id="KW-0645">Protease</keyword>
<keyword id="KW-0873">Pyrrolidone carboxylic acid</keyword>
<keyword id="KW-0964">Secreted</keyword>
<keyword id="KW-0800">Toxin</keyword>
<keyword id="KW-0862">Zinc</keyword>
<keyword id="KW-0865">Zymogen</keyword>
<evidence type="ECO:0000250" key="1"/>
<evidence type="ECO:0000255" key="2">
    <source>
        <dbReference type="PROSITE-ProRule" id="PRU00276"/>
    </source>
</evidence>
<evidence type="ECO:0000255" key="3">
    <source>
        <dbReference type="PROSITE-ProRule" id="PRU10095"/>
    </source>
</evidence>
<evidence type="ECO:0000305" key="4"/>
<organism>
    <name type="scientific">Macrovipera lebetinus</name>
    <name type="common">Levantine viper</name>
    <name type="synonym">Vipera lebetina</name>
    <dbReference type="NCBI Taxonomy" id="3148341"/>
    <lineage>
        <taxon>Eukaryota</taxon>
        <taxon>Metazoa</taxon>
        <taxon>Chordata</taxon>
        <taxon>Craniata</taxon>
        <taxon>Vertebrata</taxon>
        <taxon>Euteleostomi</taxon>
        <taxon>Lepidosauria</taxon>
        <taxon>Squamata</taxon>
        <taxon>Bifurcata</taxon>
        <taxon>Unidentata</taxon>
        <taxon>Episquamata</taxon>
        <taxon>Toxicofera</taxon>
        <taxon>Serpentes</taxon>
        <taxon>Colubroidea</taxon>
        <taxon>Viperidae</taxon>
        <taxon>Viperinae</taxon>
        <taxon>Macrovipera</taxon>
    </lineage>
</organism>
<reference key="1">
    <citation type="journal article" date="2005" name="Toxicon">
        <title>cDNA cloning of a novel P-I lebetase isoform Le-4.</title>
        <authorList>
            <person name="Aaspollu A."/>
            <person name="Siigur J."/>
            <person name="Siigur E."/>
        </authorList>
    </citation>
    <scope>NUCLEOTIDE SEQUENCE [MRNA]</scope>
    <source>
        <tissue>Venom gland</tissue>
    </source>
</reference>
<accession>Q3ZD74</accession>
<sequence>SCRKKASQLNLTPEQQRFDPRYIELVIVADHSMVTKYDGDLAAIRTWAHQLVNNIIVFYRDLNVHITLSAVEVWTNGDLINVQPAASVTLNLFGEWRERDLLNRRMHDHAQLLTAINLDDNTIGLAYNEGMCDPKYSVGIVQDHSAINRMVAATMAHEIGHNLGMDHDGNQCNCGANGCVMSAVITQQRSYQFSDCSKNKYQTYLTNHNPQCILNQP</sequence>